<name>HCY2_MAJSQ</name>
<reference evidence="1" key="1">
    <citation type="journal article" date="1999" name="Comp. Biochem. Physiol.">
        <title>Subunit composition and N-terminal analysis of arthropod hemocyanins.</title>
        <authorList>
            <person name="Stoeva S."/>
            <person name="Dolashka P."/>
            <person name="Hristova R."/>
            <person name="Genov N."/>
            <person name="Voelter W."/>
        </authorList>
    </citation>
    <scope>PROTEIN SEQUENCE</scope>
</reference>
<accession>P82303</accession>
<proteinExistence type="evidence at protein level"/>
<sequence>GQLALKQQTVNRLLNKIYSPISDAYSELKQL</sequence>
<protein>
    <recommendedName>
        <fullName>Hemocyanin subunit 2</fullName>
    </recommendedName>
</protein>
<keyword id="KW-0186">Copper</keyword>
<keyword id="KW-0903">Direct protein sequencing</keyword>
<keyword id="KW-0561">Oxygen transport</keyword>
<keyword id="KW-0964">Secreted</keyword>
<keyword id="KW-0813">Transport</keyword>
<dbReference type="SMR" id="P82303"/>
<dbReference type="GO" id="GO:0005576">
    <property type="term" value="C:extracellular region"/>
    <property type="evidence" value="ECO:0007669"/>
    <property type="project" value="UniProtKB-SubCell"/>
</dbReference>
<dbReference type="GO" id="GO:0005344">
    <property type="term" value="F:oxygen carrier activity"/>
    <property type="evidence" value="ECO:0007669"/>
    <property type="project" value="UniProtKB-KW"/>
</dbReference>
<comment type="function">
    <text>Hemocyanins are copper-containing oxygen carriers occurring freely dissolved in the hemolymph of many mollusks and arthropods.</text>
</comment>
<comment type="subcellular location">
    <subcellularLocation>
        <location>Secreted</location>
        <location>Extracellular space</location>
    </subcellularLocation>
</comment>
<comment type="tissue specificity">
    <text>Hemolymph.</text>
</comment>
<comment type="similarity">
    <text evidence="1">Belongs to the tyrosinase family. Hemocyanin subfamily.</text>
</comment>
<feature type="chain" id="PRO_0000204283" description="Hemocyanin subunit 2">
    <location>
        <begin position="1"/>
        <end position="31" status="greater than"/>
    </location>
</feature>
<feature type="non-terminal residue" evidence="1">
    <location>
        <position position="31"/>
    </location>
</feature>
<evidence type="ECO:0000305" key="1"/>
<organism evidence="1">
    <name type="scientific">Maja squinado</name>
    <name type="common">Mediterranean spider crab</name>
    <name type="synonym">Cancer squinado</name>
    <dbReference type="NCBI Taxonomy" id="99391"/>
    <lineage>
        <taxon>Eukaryota</taxon>
        <taxon>Metazoa</taxon>
        <taxon>Ecdysozoa</taxon>
        <taxon>Arthropoda</taxon>
        <taxon>Crustacea</taxon>
        <taxon>Multicrustacea</taxon>
        <taxon>Malacostraca</taxon>
        <taxon>Eumalacostraca</taxon>
        <taxon>Eucarida</taxon>
        <taxon>Decapoda</taxon>
        <taxon>Pleocyemata</taxon>
        <taxon>Brachyura</taxon>
        <taxon>Eubrachyura</taxon>
        <taxon>Majoidea</taxon>
        <taxon>Majidae</taxon>
        <taxon>Maja</taxon>
    </lineage>
</organism>